<dbReference type="EC" id="2.5.1.3" evidence="1"/>
<dbReference type="EMBL" id="CP000468">
    <property type="protein sequence ID" value="ABJ03454.1"/>
    <property type="molecule type" value="Genomic_DNA"/>
</dbReference>
<dbReference type="RefSeq" id="WP_000284655.1">
    <property type="nucleotide sequence ID" value="NZ_CADILS010000053.1"/>
</dbReference>
<dbReference type="SMR" id="A1AIG4"/>
<dbReference type="KEGG" id="ecv:APECO1_24812"/>
<dbReference type="HOGENOM" id="CLU_018272_3_3_6"/>
<dbReference type="UniPathway" id="UPA00060">
    <property type="reaction ID" value="UER00141"/>
</dbReference>
<dbReference type="Proteomes" id="UP000008216">
    <property type="component" value="Chromosome"/>
</dbReference>
<dbReference type="GO" id="GO:0005737">
    <property type="term" value="C:cytoplasm"/>
    <property type="evidence" value="ECO:0007669"/>
    <property type="project" value="TreeGrafter"/>
</dbReference>
<dbReference type="GO" id="GO:0000287">
    <property type="term" value="F:magnesium ion binding"/>
    <property type="evidence" value="ECO:0007669"/>
    <property type="project" value="UniProtKB-UniRule"/>
</dbReference>
<dbReference type="GO" id="GO:0004789">
    <property type="term" value="F:thiamine-phosphate diphosphorylase activity"/>
    <property type="evidence" value="ECO:0007669"/>
    <property type="project" value="UniProtKB-UniRule"/>
</dbReference>
<dbReference type="GO" id="GO:0009228">
    <property type="term" value="P:thiamine biosynthetic process"/>
    <property type="evidence" value="ECO:0007669"/>
    <property type="project" value="UniProtKB-KW"/>
</dbReference>
<dbReference type="GO" id="GO:0009229">
    <property type="term" value="P:thiamine diphosphate biosynthetic process"/>
    <property type="evidence" value="ECO:0007669"/>
    <property type="project" value="UniProtKB-UniRule"/>
</dbReference>
<dbReference type="CDD" id="cd00564">
    <property type="entry name" value="TMP_TenI"/>
    <property type="match status" value="1"/>
</dbReference>
<dbReference type="FunFam" id="3.20.20.70:FF:000064">
    <property type="entry name" value="Thiamine-phosphate synthase"/>
    <property type="match status" value="1"/>
</dbReference>
<dbReference type="Gene3D" id="3.20.20.70">
    <property type="entry name" value="Aldolase class I"/>
    <property type="match status" value="1"/>
</dbReference>
<dbReference type="HAMAP" id="MF_00097">
    <property type="entry name" value="TMP_synthase"/>
    <property type="match status" value="1"/>
</dbReference>
<dbReference type="InterPro" id="IPR013785">
    <property type="entry name" value="Aldolase_TIM"/>
</dbReference>
<dbReference type="InterPro" id="IPR036206">
    <property type="entry name" value="ThiamineP_synth_sf"/>
</dbReference>
<dbReference type="InterPro" id="IPR022998">
    <property type="entry name" value="ThiamineP_synth_TenI"/>
</dbReference>
<dbReference type="InterPro" id="IPR034291">
    <property type="entry name" value="TMP_synthase"/>
</dbReference>
<dbReference type="NCBIfam" id="NF002904">
    <property type="entry name" value="PRK03512.1"/>
    <property type="match status" value="1"/>
</dbReference>
<dbReference type="NCBIfam" id="TIGR00693">
    <property type="entry name" value="thiE"/>
    <property type="match status" value="1"/>
</dbReference>
<dbReference type="PANTHER" id="PTHR20857">
    <property type="entry name" value="THIAMINE-PHOSPHATE PYROPHOSPHORYLASE"/>
    <property type="match status" value="1"/>
</dbReference>
<dbReference type="PANTHER" id="PTHR20857:SF15">
    <property type="entry name" value="THIAMINE-PHOSPHATE SYNTHASE"/>
    <property type="match status" value="1"/>
</dbReference>
<dbReference type="Pfam" id="PF02581">
    <property type="entry name" value="TMP-TENI"/>
    <property type="match status" value="1"/>
</dbReference>
<dbReference type="SUPFAM" id="SSF51391">
    <property type="entry name" value="Thiamin phosphate synthase"/>
    <property type="match status" value="1"/>
</dbReference>
<proteinExistence type="inferred from homology"/>
<name>THIE_ECOK1</name>
<keyword id="KW-0460">Magnesium</keyword>
<keyword id="KW-0479">Metal-binding</keyword>
<keyword id="KW-1185">Reference proteome</keyword>
<keyword id="KW-0784">Thiamine biosynthesis</keyword>
<keyword id="KW-0808">Transferase</keyword>
<comment type="function">
    <text evidence="1">Condenses 4-methyl-5-(beta-hydroxyethyl)thiazole monophosphate (THZ-P) and 2-methyl-4-amino-5-hydroxymethyl pyrimidine pyrophosphate (HMP-PP) to form thiamine monophosphate (TMP).</text>
</comment>
<comment type="catalytic activity">
    <reaction evidence="1">
        <text>2-[(2R,5Z)-2-carboxy-4-methylthiazol-5(2H)-ylidene]ethyl phosphate + 4-amino-2-methyl-5-(diphosphooxymethyl)pyrimidine + 2 H(+) = thiamine phosphate + CO2 + diphosphate</text>
        <dbReference type="Rhea" id="RHEA:47844"/>
        <dbReference type="ChEBI" id="CHEBI:15378"/>
        <dbReference type="ChEBI" id="CHEBI:16526"/>
        <dbReference type="ChEBI" id="CHEBI:33019"/>
        <dbReference type="ChEBI" id="CHEBI:37575"/>
        <dbReference type="ChEBI" id="CHEBI:57841"/>
        <dbReference type="ChEBI" id="CHEBI:62899"/>
        <dbReference type="EC" id="2.5.1.3"/>
    </reaction>
</comment>
<comment type="catalytic activity">
    <reaction evidence="1">
        <text>2-(2-carboxy-4-methylthiazol-5-yl)ethyl phosphate + 4-amino-2-methyl-5-(diphosphooxymethyl)pyrimidine + 2 H(+) = thiamine phosphate + CO2 + diphosphate</text>
        <dbReference type="Rhea" id="RHEA:47848"/>
        <dbReference type="ChEBI" id="CHEBI:15378"/>
        <dbReference type="ChEBI" id="CHEBI:16526"/>
        <dbReference type="ChEBI" id="CHEBI:33019"/>
        <dbReference type="ChEBI" id="CHEBI:37575"/>
        <dbReference type="ChEBI" id="CHEBI:57841"/>
        <dbReference type="ChEBI" id="CHEBI:62890"/>
        <dbReference type="EC" id="2.5.1.3"/>
    </reaction>
</comment>
<comment type="catalytic activity">
    <reaction evidence="1">
        <text>4-methyl-5-(2-phosphooxyethyl)-thiazole + 4-amino-2-methyl-5-(diphosphooxymethyl)pyrimidine + H(+) = thiamine phosphate + diphosphate</text>
        <dbReference type="Rhea" id="RHEA:22328"/>
        <dbReference type="ChEBI" id="CHEBI:15378"/>
        <dbReference type="ChEBI" id="CHEBI:33019"/>
        <dbReference type="ChEBI" id="CHEBI:37575"/>
        <dbReference type="ChEBI" id="CHEBI:57841"/>
        <dbReference type="ChEBI" id="CHEBI:58296"/>
        <dbReference type="EC" id="2.5.1.3"/>
    </reaction>
</comment>
<comment type="cofactor">
    <cofactor evidence="1">
        <name>Mg(2+)</name>
        <dbReference type="ChEBI" id="CHEBI:18420"/>
    </cofactor>
    <text evidence="1">Binds 1 Mg(2+) ion per subunit.</text>
</comment>
<comment type="pathway">
    <text evidence="1">Cofactor biosynthesis; thiamine diphosphate biosynthesis; thiamine phosphate from 4-amino-2-methyl-5-diphosphomethylpyrimidine and 4-methyl-5-(2-phosphoethyl)-thiazole: step 1/1.</text>
</comment>
<comment type="similarity">
    <text evidence="1">Belongs to the thiamine-phosphate synthase family.</text>
</comment>
<gene>
    <name evidence="1" type="primary">thiE</name>
    <name type="ordered locus">Ecok1_39600</name>
    <name type="ORF">APECO1_24812</name>
</gene>
<sequence length="211" mass="23028">MYQPEFPPVPFRLGLYPVVDSVQWIERLLDAGVRTLQLRIKDRRDEEVEADVVAAIALGRRYNARLFINDYWRLAIKHQAYGVHLGQEDLQATDLSAIRAAGLRLGVSTHDDMEIDVALAARPSYIALGHVFPTQTKQMPSAPQGLEQLARHVERLADYPTVAIGGISLARAPAVIATGVGSIAVVSAITQAADWRLATAQLLEIAGVGDE</sequence>
<feature type="chain" id="PRO_1000008136" description="Thiamine-phosphate synthase">
    <location>
        <begin position="1"/>
        <end position="211"/>
    </location>
</feature>
<feature type="binding site" evidence="1">
    <location>
        <begin position="37"/>
        <end position="41"/>
    </location>
    <ligand>
        <name>4-amino-2-methyl-5-(diphosphooxymethyl)pyrimidine</name>
        <dbReference type="ChEBI" id="CHEBI:57841"/>
    </ligand>
</feature>
<feature type="binding site" evidence="1">
    <location>
        <position position="69"/>
    </location>
    <ligand>
        <name>4-amino-2-methyl-5-(diphosphooxymethyl)pyrimidine</name>
        <dbReference type="ChEBI" id="CHEBI:57841"/>
    </ligand>
</feature>
<feature type="binding site" evidence="1">
    <location>
        <position position="70"/>
    </location>
    <ligand>
        <name>Mg(2+)</name>
        <dbReference type="ChEBI" id="CHEBI:18420"/>
    </ligand>
</feature>
<feature type="binding site" evidence="1">
    <location>
        <position position="89"/>
    </location>
    <ligand>
        <name>Mg(2+)</name>
        <dbReference type="ChEBI" id="CHEBI:18420"/>
    </ligand>
</feature>
<feature type="binding site" evidence="1">
    <location>
        <position position="108"/>
    </location>
    <ligand>
        <name>4-amino-2-methyl-5-(diphosphooxymethyl)pyrimidine</name>
        <dbReference type="ChEBI" id="CHEBI:57841"/>
    </ligand>
</feature>
<feature type="binding site" evidence="1">
    <location>
        <begin position="134"/>
        <end position="136"/>
    </location>
    <ligand>
        <name>2-[(2R,5Z)-2-carboxy-4-methylthiazol-5(2H)-ylidene]ethyl phosphate</name>
        <dbReference type="ChEBI" id="CHEBI:62899"/>
    </ligand>
</feature>
<feature type="binding site" evidence="1">
    <location>
        <position position="137"/>
    </location>
    <ligand>
        <name>4-amino-2-methyl-5-(diphosphooxymethyl)pyrimidine</name>
        <dbReference type="ChEBI" id="CHEBI:57841"/>
    </ligand>
</feature>
<feature type="binding site" evidence="1">
    <location>
        <position position="166"/>
    </location>
    <ligand>
        <name>2-[(2R,5Z)-2-carboxy-4-methylthiazol-5(2H)-ylidene]ethyl phosphate</name>
        <dbReference type="ChEBI" id="CHEBI:62899"/>
    </ligand>
</feature>
<feature type="binding site" evidence="1">
    <location>
        <begin position="186"/>
        <end position="187"/>
    </location>
    <ligand>
        <name>2-[(2R,5Z)-2-carboxy-4-methylthiazol-5(2H)-ylidene]ethyl phosphate</name>
        <dbReference type="ChEBI" id="CHEBI:62899"/>
    </ligand>
</feature>
<protein>
    <recommendedName>
        <fullName evidence="1">Thiamine-phosphate synthase</fullName>
        <shortName evidence="1">TP synthase</shortName>
        <shortName evidence="1">TPS</shortName>
        <ecNumber evidence="1">2.5.1.3</ecNumber>
    </recommendedName>
    <alternativeName>
        <fullName evidence="1">Thiamine-phosphate pyrophosphorylase</fullName>
        <shortName evidence="1">TMP pyrophosphorylase</shortName>
        <shortName evidence="1">TMP-PPase</shortName>
    </alternativeName>
</protein>
<reference key="1">
    <citation type="journal article" date="2007" name="J. Bacteriol.">
        <title>The genome sequence of avian pathogenic Escherichia coli strain O1:K1:H7 shares strong similarities with human extraintestinal pathogenic E. coli genomes.</title>
        <authorList>
            <person name="Johnson T.J."/>
            <person name="Kariyawasam S."/>
            <person name="Wannemuehler Y."/>
            <person name="Mangiamele P."/>
            <person name="Johnson S.J."/>
            <person name="Doetkott C."/>
            <person name="Skyberg J.A."/>
            <person name="Lynne A.M."/>
            <person name="Johnson J.R."/>
            <person name="Nolan L.K."/>
        </authorList>
    </citation>
    <scope>NUCLEOTIDE SEQUENCE [LARGE SCALE GENOMIC DNA]</scope>
</reference>
<organism>
    <name type="scientific">Escherichia coli O1:K1 / APEC</name>
    <dbReference type="NCBI Taxonomy" id="405955"/>
    <lineage>
        <taxon>Bacteria</taxon>
        <taxon>Pseudomonadati</taxon>
        <taxon>Pseudomonadota</taxon>
        <taxon>Gammaproteobacteria</taxon>
        <taxon>Enterobacterales</taxon>
        <taxon>Enterobacteriaceae</taxon>
        <taxon>Escherichia</taxon>
    </lineage>
</organism>
<accession>A1AIG4</accession>
<evidence type="ECO:0000255" key="1">
    <source>
        <dbReference type="HAMAP-Rule" id="MF_00097"/>
    </source>
</evidence>